<name>RS16_ECO27</name>
<feature type="chain" id="PRO_1000196399" description="Small ribosomal subunit protein bS16">
    <location>
        <begin position="1"/>
        <end position="82"/>
    </location>
</feature>
<organism>
    <name type="scientific">Escherichia coli O127:H6 (strain E2348/69 / EPEC)</name>
    <dbReference type="NCBI Taxonomy" id="574521"/>
    <lineage>
        <taxon>Bacteria</taxon>
        <taxon>Pseudomonadati</taxon>
        <taxon>Pseudomonadota</taxon>
        <taxon>Gammaproteobacteria</taxon>
        <taxon>Enterobacterales</taxon>
        <taxon>Enterobacteriaceae</taxon>
        <taxon>Escherichia</taxon>
    </lineage>
</organism>
<dbReference type="EMBL" id="FM180568">
    <property type="protein sequence ID" value="CAS10446.1"/>
    <property type="molecule type" value="Genomic_DNA"/>
</dbReference>
<dbReference type="RefSeq" id="WP_000256450.1">
    <property type="nucleotide sequence ID" value="NC_011601.1"/>
</dbReference>
<dbReference type="SMR" id="B7UH58"/>
<dbReference type="GeneID" id="93774459"/>
<dbReference type="KEGG" id="ecg:E2348C_2898"/>
<dbReference type="HOGENOM" id="CLU_100590_5_1_6"/>
<dbReference type="Proteomes" id="UP000008205">
    <property type="component" value="Chromosome"/>
</dbReference>
<dbReference type="GO" id="GO:0005737">
    <property type="term" value="C:cytoplasm"/>
    <property type="evidence" value="ECO:0007669"/>
    <property type="project" value="UniProtKB-ARBA"/>
</dbReference>
<dbReference type="GO" id="GO:0015935">
    <property type="term" value="C:small ribosomal subunit"/>
    <property type="evidence" value="ECO:0007669"/>
    <property type="project" value="TreeGrafter"/>
</dbReference>
<dbReference type="GO" id="GO:0003735">
    <property type="term" value="F:structural constituent of ribosome"/>
    <property type="evidence" value="ECO:0007669"/>
    <property type="project" value="InterPro"/>
</dbReference>
<dbReference type="GO" id="GO:0006412">
    <property type="term" value="P:translation"/>
    <property type="evidence" value="ECO:0007669"/>
    <property type="project" value="UniProtKB-UniRule"/>
</dbReference>
<dbReference type="FunFam" id="3.30.1320.10:FF:000001">
    <property type="entry name" value="30S ribosomal protein S16"/>
    <property type="match status" value="1"/>
</dbReference>
<dbReference type="Gene3D" id="3.30.1320.10">
    <property type="match status" value="1"/>
</dbReference>
<dbReference type="HAMAP" id="MF_00385">
    <property type="entry name" value="Ribosomal_bS16"/>
    <property type="match status" value="1"/>
</dbReference>
<dbReference type="InterPro" id="IPR000307">
    <property type="entry name" value="Ribosomal_bS16"/>
</dbReference>
<dbReference type="InterPro" id="IPR020592">
    <property type="entry name" value="Ribosomal_bS16_CS"/>
</dbReference>
<dbReference type="InterPro" id="IPR023803">
    <property type="entry name" value="Ribosomal_bS16_dom_sf"/>
</dbReference>
<dbReference type="NCBIfam" id="TIGR00002">
    <property type="entry name" value="S16"/>
    <property type="match status" value="1"/>
</dbReference>
<dbReference type="PANTHER" id="PTHR12919">
    <property type="entry name" value="30S RIBOSOMAL PROTEIN S16"/>
    <property type="match status" value="1"/>
</dbReference>
<dbReference type="PANTHER" id="PTHR12919:SF20">
    <property type="entry name" value="SMALL RIBOSOMAL SUBUNIT PROTEIN BS16M"/>
    <property type="match status" value="1"/>
</dbReference>
<dbReference type="Pfam" id="PF00886">
    <property type="entry name" value="Ribosomal_S16"/>
    <property type="match status" value="1"/>
</dbReference>
<dbReference type="SUPFAM" id="SSF54565">
    <property type="entry name" value="Ribosomal protein S16"/>
    <property type="match status" value="1"/>
</dbReference>
<dbReference type="PROSITE" id="PS00732">
    <property type="entry name" value="RIBOSOMAL_S16"/>
    <property type="match status" value="1"/>
</dbReference>
<reference key="1">
    <citation type="journal article" date="2009" name="J. Bacteriol.">
        <title>Complete genome sequence and comparative genome analysis of enteropathogenic Escherichia coli O127:H6 strain E2348/69.</title>
        <authorList>
            <person name="Iguchi A."/>
            <person name="Thomson N.R."/>
            <person name="Ogura Y."/>
            <person name="Saunders D."/>
            <person name="Ooka T."/>
            <person name="Henderson I.R."/>
            <person name="Harris D."/>
            <person name="Asadulghani M."/>
            <person name="Kurokawa K."/>
            <person name="Dean P."/>
            <person name="Kenny B."/>
            <person name="Quail M.A."/>
            <person name="Thurston S."/>
            <person name="Dougan G."/>
            <person name="Hayashi T."/>
            <person name="Parkhill J."/>
            <person name="Frankel G."/>
        </authorList>
    </citation>
    <scope>NUCLEOTIDE SEQUENCE [LARGE SCALE GENOMIC DNA]</scope>
    <source>
        <strain>E2348/69 / EPEC</strain>
    </source>
</reference>
<gene>
    <name evidence="1" type="primary">rpsP</name>
    <name type="ordered locus">E2348C_2898</name>
</gene>
<evidence type="ECO:0000255" key="1">
    <source>
        <dbReference type="HAMAP-Rule" id="MF_00385"/>
    </source>
</evidence>
<evidence type="ECO:0000305" key="2"/>
<comment type="similarity">
    <text evidence="1">Belongs to the bacterial ribosomal protein bS16 family.</text>
</comment>
<keyword id="KW-1185">Reference proteome</keyword>
<keyword id="KW-0687">Ribonucleoprotein</keyword>
<keyword id="KW-0689">Ribosomal protein</keyword>
<sequence>MVTIRLARHGAKKRPFYQVVVADSRNARNGRFIERVGFFNPIASEKEEGTRLDLDRIAHWVGQGATISDRVAALIKEVNKAA</sequence>
<proteinExistence type="inferred from homology"/>
<protein>
    <recommendedName>
        <fullName evidence="1">Small ribosomal subunit protein bS16</fullName>
    </recommendedName>
    <alternativeName>
        <fullName evidence="2">30S ribosomal protein S16</fullName>
    </alternativeName>
</protein>
<accession>B7UH58</accession>